<feature type="signal peptide" evidence="1">
    <location>
        <begin position="1"/>
        <end position="25"/>
    </location>
</feature>
<feature type="chain" id="PRO_0000401162" description="Serpin A3-8" evidence="3">
    <location>
        <begin position="26"/>
        <end position="418"/>
    </location>
</feature>
<feature type="glycosylation site" description="N-linked (GlcNAc...) asparagine" evidence="3">
    <location>
        <position position="103"/>
    </location>
</feature>
<feature type="glycosylation site" description="N-linked (GlcNAc...) asparagine" evidence="3">
    <location>
        <position position="183"/>
    </location>
</feature>
<feature type="glycosylation site" description="N-linked (GlcNAc...) asparagine" evidence="3">
    <location>
        <position position="233"/>
    </location>
</feature>
<feature type="glycosylation site" description="N-linked (GlcNAc...) asparagine" evidence="3">
    <location>
        <position position="268"/>
    </location>
</feature>
<feature type="sequence conflict" description="In Ref. 1; ABM55501." evidence="4" ref="1">
    <original>T</original>
    <variation>A</variation>
    <location>
        <position position="31"/>
    </location>
</feature>
<feature type="sequence conflict" description="In Ref. 1; ABM55501." evidence="4" ref="1">
    <original>L</original>
    <variation>P</variation>
    <location>
        <position position="108"/>
    </location>
</feature>
<reference key="1">
    <citation type="journal article" date="2008" name="BMC Genomics">
        <title>An original SERPINA3 gene cluster: elucidation of genomic organization and gene expression in the Bos taurus 21q24 region.</title>
        <authorList>
            <person name="Pelissier P."/>
            <person name="Delourme D."/>
            <person name="Germot A."/>
            <person name="Blanchet X."/>
            <person name="Becila S."/>
            <person name="Maftah A."/>
            <person name="Leveziel H."/>
            <person name="Ouali A."/>
            <person name="Bremaud L."/>
        </authorList>
    </citation>
    <scope>NUCLEOTIDE SEQUENCE [GENOMIC DNA]</scope>
    <scope>NOMENCLATURE</scope>
</reference>
<reference evidence="4 5" key="2">
    <citation type="submission" date="2007-07" db="EMBL/GenBank/DDBJ databases">
        <authorList>
            <consortium name="NIH - Mammalian Gene Collection (MGC) project"/>
        </authorList>
    </citation>
    <scope>NUCLEOTIDE SEQUENCE [LARGE SCALE MRNA]</scope>
    <source>
        <strain evidence="5">Hereford</strain>
        <tissue evidence="5">Fetal liver</tissue>
    </source>
</reference>
<accession>A6QPQ2</accession>
<accession>A2I7N4</accession>
<organism>
    <name type="scientific">Bos taurus</name>
    <name type="common">Bovine</name>
    <dbReference type="NCBI Taxonomy" id="9913"/>
    <lineage>
        <taxon>Eukaryota</taxon>
        <taxon>Metazoa</taxon>
        <taxon>Chordata</taxon>
        <taxon>Craniata</taxon>
        <taxon>Vertebrata</taxon>
        <taxon>Euteleostomi</taxon>
        <taxon>Mammalia</taxon>
        <taxon>Eutheria</taxon>
        <taxon>Laurasiatheria</taxon>
        <taxon>Artiodactyla</taxon>
        <taxon>Ruminantia</taxon>
        <taxon>Pecora</taxon>
        <taxon>Bovidae</taxon>
        <taxon>Bovinae</taxon>
        <taxon>Bos</taxon>
    </lineage>
</organism>
<proteinExistence type="evidence at transcript level"/>
<dbReference type="EMBL" id="EF153631">
    <property type="protein sequence ID" value="ABM55501.1"/>
    <property type="molecule type" value="Genomic_DNA"/>
</dbReference>
<dbReference type="EMBL" id="BC149427">
    <property type="protein sequence ID" value="AAI49428.1"/>
    <property type="molecule type" value="mRNA"/>
</dbReference>
<dbReference type="RefSeq" id="NP_001075181.1">
    <property type="nucleotide sequence ID" value="NM_001081712.1"/>
</dbReference>
<dbReference type="SMR" id="A6QPQ2"/>
<dbReference type="FunCoup" id="A6QPQ2">
    <property type="interactions" value="124"/>
</dbReference>
<dbReference type="STRING" id="9913.ENSBTAP00000009261"/>
<dbReference type="GlyCosmos" id="A6QPQ2">
    <property type="glycosylation" value="4 sites, No reported glycans"/>
</dbReference>
<dbReference type="GlyGen" id="A6QPQ2">
    <property type="glycosylation" value="4 sites"/>
</dbReference>
<dbReference type="PaxDb" id="9913-ENSBTAP00000009261"/>
<dbReference type="PeptideAtlas" id="A6QPQ2"/>
<dbReference type="GeneID" id="505820"/>
<dbReference type="KEGG" id="bta:505820"/>
<dbReference type="CTD" id="505820"/>
<dbReference type="eggNOG" id="KOG2392">
    <property type="taxonomic scope" value="Eukaryota"/>
</dbReference>
<dbReference type="InParanoid" id="A6QPQ2"/>
<dbReference type="OrthoDB" id="671595at2759"/>
<dbReference type="Proteomes" id="UP000009136">
    <property type="component" value="Unplaced"/>
</dbReference>
<dbReference type="GO" id="GO:0042583">
    <property type="term" value="C:chromaffin granule"/>
    <property type="evidence" value="ECO:0007669"/>
    <property type="project" value="UniProtKB-SubCell"/>
</dbReference>
<dbReference type="GO" id="GO:0031410">
    <property type="term" value="C:cytoplasmic vesicle"/>
    <property type="evidence" value="ECO:0000250"/>
    <property type="project" value="UniProtKB"/>
</dbReference>
<dbReference type="GO" id="GO:0005615">
    <property type="term" value="C:extracellular space"/>
    <property type="evidence" value="ECO:0000250"/>
    <property type="project" value="UniProtKB"/>
</dbReference>
<dbReference type="GO" id="GO:0004867">
    <property type="term" value="F:serine-type endopeptidase inhibitor activity"/>
    <property type="evidence" value="ECO:0000250"/>
    <property type="project" value="UniProtKB"/>
</dbReference>
<dbReference type="CDD" id="cd19551">
    <property type="entry name" value="serpinA3_A1AC"/>
    <property type="match status" value="1"/>
</dbReference>
<dbReference type="FunFam" id="3.30.497.10:FF:000001">
    <property type="entry name" value="Serine protease inhibitor"/>
    <property type="match status" value="1"/>
</dbReference>
<dbReference type="FunFam" id="2.30.39.10:FF:000002">
    <property type="entry name" value="Serpin family D member 1"/>
    <property type="match status" value="1"/>
</dbReference>
<dbReference type="Gene3D" id="2.30.39.10">
    <property type="entry name" value="Alpha-1-antitrypsin, domain 1"/>
    <property type="match status" value="1"/>
</dbReference>
<dbReference type="Gene3D" id="3.30.497.10">
    <property type="entry name" value="Antithrombin, subunit I, domain 2"/>
    <property type="match status" value="1"/>
</dbReference>
<dbReference type="InterPro" id="IPR023795">
    <property type="entry name" value="Serpin_CS"/>
</dbReference>
<dbReference type="InterPro" id="IPR023796">
    <property type="entry name" value="Serpin_dom"/>
</dbReference>
<dbReference type="InterPro" id="IPR000215">
    <property type="entry name" value="Serpin_fam"/>
</dbReference>
<dbReference type="InterPro" id="IPR036186">
    <property type="entry name" value="Serpin_sf"/>
</dbReference>
<dbReference type="InterPro" id="IPR042178">
    <property type="entry name" value="Serpin_sf_1"/>
</dbReference>
<dbReference type="InterPro" id="IPR042185">
    <property type="entry name" value="Serpin_sf_2"/>
</dbReference>
<dbReference type="PANTHER" id="PTHR11461:SF145">
    <property type="entry name" value="ALPHA-1-ANTICHYMOTRYPSIN"/>
    <property type="match status" value="1"/>
</dbReference>
<dbReference type="PANTHER" id="PTHR11461">
    <property type="entry name" value="SERINE PROTEASE INHIBITOR, SERPIN"/>
    <property type="match status" value="1"/>
</dbReference>
<dbReference type="Pfam" id="PF00079">
    <property type="entry name" value="Serpin"/>
    <property type="match status" value="1"/>
</dbReference>
<dbReference type="SMART" id="SM00093">
    <property type="entry name" value="SERPIN"/>
    <property type="match status" value="1"/>
</dbReference>
<dbReference type="SUPFAM" id="SSF56574">
    <property type="entry name" value="Serpins"/>
    <property type="match status" value="1"/>
</dbReference>
<dbReference type="PROSITE" id="PS00284">
    <property type="entry name" value="SERPIN"/>
    <property type="match status" value="1"/>
</dbReference>
<protein>
    <recommendedName>
        <fullName>Serpin A3-8</fullName>
    </recommendedName>
</protein>
<evidence type="ECO:0000250" key="1"/>
<evidence type="ECO:0000250" key="2">
    <source>
        <dbReference type="UniProtKB" id="Q9TTE1"/>
    </source>
</evidence>
<evidence type="ECO:0000255" key="3"/>
<evidence type="ECO:0000305" key="4"/>
<evidence type="ECO:0000312" key="5">
    <source>
        <dbReference type="EMBL" id="AAI49428.1"/>
    </source>
</evidence>
<comment type="function">
    <text evidence="2">Serine protease inhibitor.</text>
</comment>
<comment type="subunit">
    <text evidence="2">Homodimer.</text>
</comment>
<comment type="subcellular location">
    <subcellularLocation>
        <location evidence="2">Cytoplasmic vesicle</location>
        <location evidence="2">Secretory vesicle</location>
        <location evidence="2">Chromaffin granule</location>
    </subcellularLocation>
    <subcellularLocation>
        <location evidence="2">Secreted</location>
    </subcellularLocation>
</comment>
<comment type="similarity">
    <text evidence="3">Belongs to the serpin family.</text>
</comment>
<name>SPA38_BOVIN</name>
<sequence length="418" mass="46964">MRAERMSPLLALGLLVSGLCSRVHCLPENVTPEERHKGTSVDGHSLASSNTDFAFSLYKQLALKNPNKNVIFSPLSISIALAFLSLGARGPTVTEILEGLKFNLTETLEREIHQGFQHLLQMLSRPSNELQLSVGNTMFVQEQLKLLDKFREDALALYTSEAFSTNFKDPETAKSLINDYVKNKTRGKIVDLFKDLDPLTKVILVNYIYFKAQWRTPFDPKQTYKSQFHVSKNKTVEVPMMSIGDLVTPYFRDEELDCTLVELTYTSNDSALFILPDEGKMQDLEAKLIPEMLTRWRESLYPRGIHELNLPRFSIATDYKLKDILSQLEIKKVFTQEADLSGITDDHELEVSQVVHKAVLDVGEEGTEGAAATGVKVGITSINNHIPLSFNRPFLIAIVLKDTQSIIFLGKVTNPSQA</sequence>
<gene>
    <name evidence="5" type="primary">SERPINA3-8</name>
</gene>
<keyword id="KW-0968">Cytoplasmic vesicle</keyword>
<keyword id="KW-0325">Glycoprotein</keyword>
<keyword id="KW-0646">Protease inhibitor</keyword>
<keyword id="KW-1185">Reference proteome</keyword>
<keyword id="KW-0964">Secreted</keyword>
<keyword id="KW-0722">Serine protease inhibitor</keyword>
<keyword id="KW-0732">Signal</keyword>